<accession>B1LBT2</accession>
<sequence>MNVAILLAAGKGERMSENVPKQFLEIEGRMLFEYPLSTFLKSEAIDGVVIVTRREWFEVVEKRVFHEKVLGIVEGGDTRSQSVRSALEFLEKFSPSYVLVHDSARPFLRKKHVSEVLRRARETGAATLALKNSDALVRVENDRIEYIPRKGVYRILTPQAFSYEILKEAHENGGEWADDTEPVQKLGVKIALVEGDPLCFKVTFKEDLELARIIAREWERIP</sequence>
<proteinExistence type="inferred from homology"/>
<keyword id="KW-0414">Isoprene biosynthesis</keyword>
<keyword id="KW-0548">Nucleotidyltransferase</keyword>
<keyword id="KW-0808">Transferase</keyword>
<evidence type="ECO:0000255" key="1">
    <source>
        <dbReference type="HAMAP-Rule" id="MF_00108"/>
    </source>
</evidence>
<name>ISPD_THESQ</name>
<dbReference type="EC" id="2.7.7.60" evidence="1"/>
<dbReference type="EMBL" id="CP000969">
    <property type="protein sequence ID" value="ACB09780.1"/>
    <property type="molecule type" value="Genomic_DNA"/>
</dbReference>
<dbReference type="RefSeq" id="WP_012311128.1">
    <property type="nucleotide sequence ID" value="NC_010483.1"/>
</dbReference>
<dbReference type="SMR" id="B1LBT2"/>
<dbReference type="KEGG" id="trq:TRQ2_1436"/>
<dbReference type="HOGENOM" id="CLU_061281_2_2_0"/>
<dbReference type="UniPathway" id="UPA00056">
    <property type="reaction ID" value="UER00093"/>
</dbReference>
<dbReference type="Proteomes" id="UP000001687">
    <property type="component" value="Chromosome"/>
</dbReference>
<dbReference type="GO" id="GO:0005829">
    <property type="term" value="C:cytosol"/>
    <property type="evidence" value="ECO:0007669"/>
    <property type="project" value="TreeGrafter"/>
</dbReference>
<dbReference type="GO" id="GO:0050518">
    <property type="term" value="F:2-C-methyl-D-erythritol 4-phosphate cytidylyltransferase activity"/>
    <property type="evidence" value="ECO:0007669"/>
    <property type="project" value="UniProtKB-UniRule"/>
</dbReference>
<dbReference type="GO" id="GO:0019288">
    <property type="term" value="P:isopentenyl diphosphate biosynthetic process, methylerythritol 4-phosphate pathway"/>
    <property type="evidence" value="ECO:0007669"/>
    <property type="project" value="UniProtKB-UniRule"/>
</dbReference>
<dbReference type="CDD" id="cd02516">
    <property type="entry name" value="CDP-ME_synthetase"/>
    <property type="match status" value="1"/>
</dbReference>
<dbReference type="FunFam" id="3.90.550.10:FF:000003">
    <property type="entry name" value="2-C-methyl-D-erythritol 4-phosphate cytidylyltransferase"/>
    <property type="match status" value="1"/>
</dbReference>
<dbReference type="Gene3D" id="3.90.550.10">
    <property type="entry name" value="Spore Coat Polysaccharide Biosynthesis Protein SpsA, Chain A"/>
    <property type="match status" value="1"/>
</dbReference>
<dbReference type="HAMAP" id="MF_00108">
    <property type="entry name" value="IspD"/>
    <property type="match status" value="1"/>
</dbReference>
<dbReference type="InterPro" id="IPR001228">
    <property type="entry name" value="IspD"/>
</dbReference>
<dbReference type="InterPro" id="IPR034683">
    <property type="entry name" value="IspD/TarI"/>
</dbReference>
<dbReference type="InterPro" id="IPR018294">
    <property type="entry name" value="ISPD_synthase_CS"/>
</dbReference>
<dbReference type="InterPro" id="IPR029044">
    <property type="entry name" value="Nucleotide-diphossugar_trans"/>
</dbReference>
<dbReference type="NCBIfam" id="TIGR00453">
    <property type="entry name" value="ispD"/>
    <property type="match status" value="1"/>
</dbReference>
<dbReference type="PANTHER" id="PTHR43015">
    <property type="entry name" value="D-RIBITOL-5-PHOSPHATE CYTIDYLYLTRANSFERASE"/>
    <property type="match status" value="1"/>
</dbReference>
<dbReference type="PANTHER" id="PTHR43015:SF1">
    <property type="entry name" value="D-RIBITOL-5-PHOSPHATE CYTIDYLYLTRANSFERASE"/>
    <property type="match status" value="1"/>
</dbReference>
<dbReference type="Pfam" id="PF01128">
    <property type="entry name" value="IspD"/>
    <property type="match status" value="1"/>
</dbReference>
<dbReference type="SUPFAM" id="SSF53448">
    <property type="entry name" value="Nucleotide-diphospho-sugar transferases"/>
    <property type="match status" value="1"/>
</dbReference>
<dbReference type="PROSITE" id="PS01295">
    <property type="entry name" value="ISPD"/>
    <property type="match status" value="1"/>
</dbReference>
<reference key="1">
    <citation type="journal article" date="2011" name="J. Bacteriol.">
        <title>Genome sequence of Thermotoga sp. strain RQ2, a hyperthermophilic bacterium isolated from a geothermally heated region of the seafloor near Ribeira Quente, the Azores.</title>
        <authorList>
            <person name="Swithers K.S."/>
            <person name="DiPippo J.L."/>
            <person name="Bruce D.C."/>
            <person name="Detter C."/>
            <person name="Tapia R."/>
            <person name="Han S."/>
            <person name="Saunders E."/>
            <person name="Goodwin L.A."/>
            <person name="Han J."/>
            <person name="Woyke T."/>
            <person name="Pitluck S."/>
            <person name="Pennacchio L."/>
            <person name="Nolan M."/>
            <person name="Mikhailova N."/>
            <person name="Lykidis A."/>
            <person name="Land M.L."/>
            <person name="Brettin T."/>
            <person name="Stetter K.O."/>
            <person name="Nelson K.E."/>
            <person name="Gogarten J.P."/>
            <person name="Noll K.M."/>
        </authorList>
    </citation>
    <scope>NUCLEOTIDE SEQUENCE [LARGE SCALE GENOMIC DNA]</scope>
    <source>
        <strain>RQ2</strain>
    </source>
</reference>
<protein>
    <recommendedName>
        <fullName evidence="1">2-C-methyl-D-erythritol 4-phosphate cytidylyltransferase</fullName>
        <ecNumber evidence="1">2.7.7.60</ecNumber>
    </recommendedName>
    <alternativeName>
        <fullName evidence="1">4-diphosphocytidyl-2C-methyl-D-erythritol synthase</fullName>
    </alternativeName>
    <alternativeName>
        <fullName evidence="1">MEP cytidylyltransferase</fullName>
        <shortName evidence="1">MCT</shortName>
    </alternativeName>
</protein>
<comment type="function">
    <text evidence="1">Catalyzes the formation of 4-diphosphocytidyl-2-C-methyl-D-erythritol from CTP and 2-C-methyl-D-erythritol 4-phosphate (MEP).</text>
</comment>
<comment type="catalytic activity">
    <reaction evidence="1">
        <text>2-C-methyl-D-erythritol 4-phosphate + CTP + H(+) = 4-CDP-2-C-methyl-D-erythritol + diphosphate</text>
        <dbReference type="Rhea" id="RHEA:13429"/>
        <dbReference type="ChEBI" id="CHEBI:15378"/>
        <dbReference type="ChEBI" id="CHEBI:33019"/>
        <dbReference type="ChEBI" id="CHEBI:37563"/>
        <dbReference type="ChEBI" id="CHEBI:57823"/>
        <dbReference type="ChEBI" id="CHEBI:58262"/>
        <dbReference type="EC" id="2.7.7.60"/>
    </reaction>
</comment>
<comment type="pathway">
    <text evidence="1">Isoprenoid biosynthesis; isopentenyl diphosphate biosynthesis via DXP pathway; isopentenyl diphosphate from 1-deoxy-D-xylulose 5-phosphate: step 2/6.</text>
</comment>
<comment type="similarity">
    <text evidence="1">Belongs to the IspD/TarI cytidylyltransferase family. IspD subfamily.</text>
</comment>
<feature type="chain" id="PRO_1000094356" description="2-C-methyl-D-erythritol 4-phosphate cytidylyltransferase">
    <location>
        <begin position="1"/>
        <end position="222"/>
    </location>
</feature>
<feature type="site" description="Transition state stabilizer" evidence="1">
    <location>
        <position position="14"/>
    </location>
</feature>
<feature type="site" description="Transition state stabilizer" evidence="1">
    <location>
        <position position="21"/>
    </location>
</feature>
<feature type="site" description="Positions MEP for the nucleophilic attack" evidence="1">
    <location>
        <position position="149"/>
    </location>
</feature>
<feature type="site" description="Positions MEP for the nucleophilic attack" evidence="1">
    <location>
        <position position="201"/>
    </location>
</feature>
<gene>
    <name evidence="1" type="primary">ispD</name>
    <name type="ordered locus">TRQ2_1436</name>
</gene>
<organism>
    <name type="scientific">Thermotoga sp. (strain RQ2)</name>
    <dbReference type="NCBI Taxonomy" id="126740"/>
    <lineage>
        <taxon>Bacteria</taxon>
        <taxon>Thermotogati</taxon>
        <taxon>Thermotogota</taxon>
        <taxon>Thermotogae</taxon>
        <taxon>Thermotogales</taxon>
        <taxon>Thermotogaceae</taxon>
        <taxon>Thermotoga</taxon>
    </lineage>
</organism>